<gene>
    <name type="primary">CYP75A5</name>
</gene>
<comment type="function">
    <text evidence="2">Catalyzes the 3'5'-hydroxylation of naringenin and eriodictyol to form 5,7,3,'4',5'-pentahydroxyflavanone and 3',5'-hydroxylation of dihydrokaempferol and dihydroquercetin to form dihydromyricetin.</text>
</comment>
<comment type="catalytic activity">
    <reaction evidence="2">
        <text>a 3',5'-unsubstituted flavanone + 2 reduced [NADPH--hemoprotein reductase] + 2 O2 = a 3',5'-dihydroxyflavanone + 2 oxidized [NADPH--hemoprotein reductase] + 2 H2O + 2 H(+)</text>
        <dbReference type="Rhea" id="RHEA:55448"/>
        <dbReference type="Rhea" id="RHEA-COMP:11964"/>
        <dbReference type="Rhea" id="RHEA-COMP:11965"/>
        <dbReference type="ChEBI" id="CHEBI:15377"/>
        <dbReference type="ChEBI" id="CHEBI:15378"/>
        <dbReference type="ChEBI" id="CHEBI:15379"/>
        <dbReference type="ChEBI" id="CHEBI:48025"/>
        <dbReference type="ChEBI" id="CHEBI:57618"/>
        <dbReference type="ChEBI" id="CHEBI:58210"/>
        <dbReference type="ChEBI" id="CHEBI:138897"/>
        <dbReference type="EC" id="1.14.14.81"/>
    </reaction>
</comment>
<comment type="cofactor">
    <cofactor evidence="1">
        <name>heme</name>
        <dbReference type="ChEBI" id="CHEBI:30413"/>
    </cofactor>
</comment>
<comment type="pathway">
    <text>Pigment biosynthesis; anthocyanin biosynthesis.</text>
</comment>
<comment type="similarity">
    <text evidence="3">Belongs to the cytochrome P450 family.</text>
</comment>
<feature type="chain" id="PRO_0000052133" description="Flavonoid 3',5'-hydroxylase">
    <location>
        <begin position="1"/>
        <end position="510"/>
    </location>
</feature>
<feature type="binding site" description="axial binding residue" evidence="1">
    <location>
        <position position="447"/>
    </location>
    <ligand>
        <name>heme</name>
        <dbReference type="ChEBI" id="CHEBI:30413"/>
    </ligand>
    <ligandPart>
        <name>Fe</name>
        <dbReference type="ChEBI" id="CHEBI:18248"/>
    </ligandPart>
</feature>
<sequence length="510" mass="56894">MAVGNGVLLHIARSLMLFFHVQKLVQYLWMNSRRHRLPPGPIGWPVLGALPLLGTMPHVALANMAKKYGPVMYLKVGSCGLAVASTPEAAKAFLKTLDMNFSNRPPNAGATHLAYNAQDMVFADYGPRWKLLRKLSNIHILGGKALQGWEEVRKKELGYMLYAMAESGRHGQPVVVSEMLTYAMANMLGQVMLSKRVFGSQGSESNEFKDMVVELMTVAGYFNIGDFIPSIAWMDLQGIQGGMKRLHKKFDALLTRLLEEHTASAHERKGSPDFLDFVVANRDNSEGERLHTVNIKALLLNMFTAGTDTSSSVIEWALAELLKNPIILKRAQEEMDGVIGRDRRFLEADISKLPYLQAICKEAFRKHPSTPLNLPRIASQACEVNGHYIPKGTRLSVNIWAIGRDPSLWENPNEFNPDRFLERKNAKIDPRGNDFELIPFGAGRRICAGTRLGILLVEYILGTLVHSFDWELPSSVIELNMDEPFGLALQKAVPLAAMVTPRLPLHIYCP</sequence>
<accession>Q96418</accession>
<dbReference type="EC" id="1.14.14.81" evidence="2"/>
<dbReference type="EMBL" id="U72654">
    <property type="protein sequence ID" value="AAB17562.1"/>
    <property type="molecule type" value="mRNA"/>
</dbReference>
<dbReference type="SMR" id="Q96418"/>
<dbReference type="UniPathway" id="UPA00009"/>
<dbReference type="GO" id="GO:0033772">
    <property type="term" value="F:flavonoid 3',5'-hydroxylase activity"/>
    <property type="evidence" value="ECO:0007669"/>
    <property type="project" value="UniProtKB-EC"/>
</dbReference>
<dbReference type="GO" id="GO:0020037">
    <property type="term" value="F:heme binding"/>
    <property type="evidence" value="ECO:0007669"/>
    <property type="project" value="InterPro"/>
</dbReference>
<dbReference type="GO" id="GO:0005506">
    <property type="term" value="F:iron ion binding"/>
    <property type="evidence" value="ECO:0007669"/>
    <property type="project" value="InterPro"/>
</dbReference>
<dbReference type="GO" id="GO:0009718">
    <property type="term" value="P:anthocyanin-containing compound biosynthetic process"/>
    <property type="evidence" value="ECO:0007669"/>
    <property type="project" value="UniProtKB-UniPathway"/>
</dbReference>
<dbReference type="CDD" id="cd20657">
    <property type="entry name" value="CYP75"/>
    <property type="match status" value="1"/>
</dbReference>
<dbReference type="FunFam" id="1.10.630.10:FF:000111">
    <property type="entry name" value="Flavonoid 3',5'-hydroxylase 2"/>
    <property type="match status" value="1"/>
</dbReference>
<dbReference type="Gene3D" id="1.10.630.10">
    <property type="entry name" value="Cytochrome P450"/>
    <property type="match status" value="1"/>
</dbReference>
<dbReference type="InterPro" id="IPR001128">
    <property type="entry name" value="Cyt_P450"/>
</dbReference>
<dbReference type="InterPro" id="IPR017972">
    <property type="entry name" value="Cyt_P450_CS"/>
</dbReference>
<dbReference type="InterPro" id="IPR002401">
    <property type="entry name" value="Cyt_P450_E_grp-I"/>
</dbReference>
<dbReference type="InterPro" id="IPR036396">
    <property type="entry name" value="Cyt_P450_sf"/>
</dbReference>
<dbReference type="PANTHER" id="PTHR47944">
    <property type="entry name" value="CYTOCHROME P450 98A9"/>
    <property type="match status" value="1"/>
</dbReference>
<dbReference type="PANTHER" id="PTHR47944:SF18">
    <property type="entry name" value="FLAVONOID 3'-MONOOXYGENASE"/>
    <property type="match status" value="1"/>
</dbReference>
<dbReference type="Pfam" id="PF00067">
    <property type="entry name" value="p450"/>
    <property type="match status" value="1"/>
</dbReference>
<dbReference type="PRINTS" id="PR00463">
    <property type="entry name" value="EP450I"/>
</dbReference>
<dbReference type="PRINTS" id="PR00385">
    <property type="entry name" value="P450"/>
</dbReference>
<dbReference type="SUPFAM" id="SSF48264">
    <property type="entry name" value="Cytochrome P450"/>
    <property type="match status" value="1"/>
</dbReference>
<dbReference type="PROSITE" id="PS00086">
    <property type="entry name" value="CYTOCHROME_P450"/>
    <property type="match status" value="1"/>
</dbReference>
<organism>
    <name type="scientific">Eustoma exaltatum subsp. russellianum</name>
    <name type="common">Bluebells</name>
    <name type="synonym">Eustoma grandiflorum</name>
    <dbReference type="NCBI Taxonomy" id="52518"/>
    <lineage>
        <taxon>Eukaryota</taxon>
        <taxon>Viridiplantae</taxon>
        <taxon>Streptophyta</taxon>
        <taxon>Embryophyta</taxon>
        <taxon>Tracheophyta</taxon>
        <taxon>Spermatophyta</taxon>
        <taxon>Magnoliopsida</taxon>
        <taxon>eudicotyledons</taxon>
        <taxon>Gunneridae</taxon>
        <taxon>Pentapetalae</taxon>
        <taxon>asterids</taxon>
        <taxon>lamiids</taxon>
        <taxon>Gentianales</taxon>
        <taxon>Gentianaceae</taxon>
        <taxon>Chironieae</taxon>
        <taxon>Chironiinae</taxon>
        <taxon>Eustoma</taxon>
    </lineage>
</organism>
<reference key="1">
    <citation type="submission" date="1996-09" db="EMBL/GenBank/DDBJ databases">
        <title>cDNA Cloning and Expression of a flavonoid 3'5'-hydroxylase from petals of lisianthus (Eustoma grandiflorum Grise).</title>
        <authorList>
            <person name="Nielsen K.M."/>
            <person name="Podivinsky E."/>
        </authorList>
    </citation>
    <scope>NUCLEOTIDE SEQUENCE [MRNA]</scope>
    <source>
        <tissue>Petal</tissue>
    </source>
</reference>
<evidence type="ECO:0000250" key="1"/>
<evidence type="ECO:0000250" key="2">
    <source>
        <dbReference type="UniProtKB" id="P48418"/>
    </source>
</evidence>
<evidence type="ECO:0000305" key="3"/>
<name>C75A5_EUSER</name>
<proteinExistence type="evidence at transcript level"/>
<keyword id="KW-0349">Heme</keyword>
<keyword id="KW-0408">Iron</keyword>
<keyword id="KW-0479">Metal-binding</keyword>
<keyword id="KW-0503">Monooxygenase</keyword>
<keyword id="KW-0521">NADP</keyword>
<keyword id="KW-0560">Oxidoreductase</keyword>
<protein>
    <recommendedName>
        <fullName>Flavonoid 3',5'-hydroxylase</fullName>
        <shortName>F3'5'H</shortName>
        <ecNumber evidence="2">1.14.14.81</ecNumber>
    </recommendedName>
    <alternativeName>
        <fullName>Cytochrome P450 75A5</fullName>
    </alternativeName>
</protein>